<sequence length="75" mass="9072">MARYFRRRKFCRFTAEGVQEIDYKDIATLKNYITESGKIVPSRITGTRAKYQRQLRRAIKRARYLSLLPYTDRHQ</sequence>
<feature type="initiator methionine" description="Removed" evidence="1">
    <location>
        <position position="1"/>
    </location>
</feature>
<feature type="chain" id="PRO_0000111221" description="Small ribosomal subunit protein bS18">
    <location>
        <begin position="2"/>
        <end position="75"/>
    </location>
</feature>
<feature type="modified residue" description="N-acetylalanine" evidence="1">
    <location>
        <position position="2"/>
    </location>
</feature>
<evidence type="ECO:0000250" key="1"/>
<evidence type="ECO:0000255" key="2">
    <source>
        <dbReference type="HAMAP-Rule" id="MF_00270"/>
    </source>
</evidence>
<evidence type="ECO:0000305" key="3"/>
<reference key="1">
    <citation type="journal article" date="2001" name="Nature">
        <title>Complete genome sequence of Salmonella enterica serovar Typhimurium LT2.</title>
        <authorList>
            <person name="McClelland M."/>
            <person name="Sanderson K.E."/>
            <person name="Spieth J."/>
            <person name="Clifton S.W."/>
            <person name="Latreille P."/>
            <person name="Courtney L."/>
            <person name="Porwollik S."/>
            <person name="Ali J."/>
            <person name="Dante M."/>
            <person name="Du F."/>
            <person name="Hou S."/>
            <person name="Layman D."/>
            <person name="Leonard S."/>
            <person name="Nguyen C."/>
            <person name="Scott K."/>
            <person name="Holmes A."/>
            <person name="Grewal N."/>
            <person name="Mulvaney E."/>
            <person name="Ryan E."/>
            <person name="Sun H."/>
            <person name="Florea L."/>
            <person name="Miller W."/>
            <person name="Stoneking T."/>
            <person name="Nhan M."/>
            <person name="Waterston R."/>
            <person name="Wilson R.K."/>
        </authorList>
    </citation>
    <scope>NUCLEOTIDE SEQUENCE [LARGE SCALE GENOMIC DNA]</scope>
    <source>
        <strain>LT2 / SGSC1412 / ATCC 700720</strain>
    </source>
</reference>
<proteinExistence type="evidence at protein level"/>
<accession>Q8ZK81</accession>
<protein>
    <recommendedName>
        <fullName evidence="3">Small ribosomal subunit protein bS18</fullName>
    </recommendedName>
    <alternativeName>
        <fullName>30S ribosomal protein S18</fullName>
    </alternativeName>
</protein>
<keyword id="KW-0002">3D-structure</keyword>
<keyword id="KW-0007">Acetylation</keyword>
<keyword id="KW-1185">Reference proteome</keyword>
<keyword id="KW-0687">Ribonucleoprotein</keyword>
<keyword id="KW-0689">Ribosomal protein</keyword>
<keyword id="KW-0694">RNA-binding</keyword>
<keyword id="KW-0699">rRNA-binding</keyword>
<name>RS18_SALTY</name>
<comment type="function">
    <text evidence="2">Binds as a heterodimer with protein bS6 to the central domain of the 16S rRNA, where it helps stabilize the platform of the 30S subunit.</text>
</comment>
<comment type="subunit">
    <text evidence="2">Part of the 30S ribosomal subunit. Forms a tight heterodimer with protein bS6.</text>
</comment>
<comment type="similarity">
    <text evidence="3">Belongs to the bacterial ribosomal protein bS18 family.</text>
</comment>
<dbReference type="EMBL" id="AE006468">
    <property type="protein sequence ID" value="AAL23213.1"/>
    <property type="molecule type" value="Genomic_DNA"/>
</dbReference>
<dbReference type="RefSeq" id="NP_463254.2">
    <property type="nucleotide sequence ID" value="NC_003197.2"/>
</dbReference>
<dbReference type="PDB" id="2CNM">
    <property type="method" value="X-ray"/>
    <property type="resolution" value="2.60 A"/>
    <property type="chains" value="D/E/F=2-7"/>
</dbReference>
<dbReference type="PDBsum" id="2CNM"/>
<dbReference type="SMR" id="Q8ZK81"/>
<dbReference type="STRING" id="99287.STM4393"/>
<dbReference type="PaxDb" id="99287-STM4393"/>
<dbReference type="GeneID" id="1255919"/>
<dbReference type="KEGG" id="stm:STM4393"/>
<dbReference type="PATRIC" id="fig|99287.12.peg.4618"/>
<dbReference type="HOGENOM" id="CLU_148710_2_3_6"/>
<dbReference type="PhylomeDB" id="Q8ZK81"/>
<dbReference type="BioCyc" id="SENT99287:STM4393-MONOMER"/>
<dbReference type="EvolutionaryTrace" id="Q8ZK81"/>
<dbReference type="Proteomes" id="UP000001014">
    <property type="component" value="Chromosome"/>
</dbReference>
<dbReference type="GO" id="GO:0022627">
    <property type="term" value="C:cytosolic small ribosomal subunit"/>
    <property type="evidence" value="ECO:0000318"/>
    <property type="project" value="GO_Central"/>
</dbReference>
<dbReference type="GO" id="GO:0070181">
    <property type="term" value="F:small ribosomal subunit rRNA binding"/>
    <property type="evidence" value="ECO:0000318"/>
    <property type="project" value="GO_Central"/>
</dbReference>
<dbReference type="GO" id="GO:0003735">
    <property type="term" value="F:structural constituent of ribosome"/>
    <property type="evidence" value="ECO:0000318"/>
    <property type="project" value="GO_Central"/>
</dbReference>
<dbReference type="GO" id="GO:0006412">
    <property type="term" value="P:translation"/>
    <property type="evidence" value="ECO:0000318"/>
    <property type="project" value="GO_Central"/>
</dbReference>
<dbReference type="FunFam" id="4.10.640.10:FF:000001">
    <property type="entry name" value="30S ribosomal protein S18"/>
    <property type="match status" value="1"/>
</dbReference>
<dbReference type="Gene3D" id="4.10.640.10">
    <property type="entry name" value="Ribosomal protein S18"/>
    <property type="match status" value="1"/>
</dbReference>
<dbReference type="HAMAP" id="MF_00270">
    <property type="entry name" value="Ribosomal_bS18"/>
    <property type="match status" value="1"/>
</dbReference>
<dbReference type="InterPro" id="IPR001648">
    <property type="entry name" value="Ribosomal_bS18"/>
</dbReference>
<dbReference type="InterPro" id="IPR018275">
    <property type="entry name" value="Ribosomal_bS18_CS"/>
</dbReference>
<dbReference type="InterPro" id="IPR036870">
    <property type="entry name" value="Ribosomal_bS18_sf"/>
</dbReference>
<dbReference type="NCBIfam" id="TIGR00165">
    <property type="entry name" value="S18"/>
    <property type="match status" value="1"/>
</dbReference>
<dbReference type="PANTHER" id="PTHR13479">
    <property type="entry name" value="30S RIBOSOMAL PROTEIN S18"/>
    <property type="match status" value="1"/>
</dbReference>
<dbReference type="PANTHER" id="PTHR13479:SF40">
    <property type="entry name" value="SMALL RIBOSOMAL SUBUNIT PROTEIN BS18M"/>
    <property type="match status" value="1"/>
</dbReference>
<dbReference type="Pfam" id="PF01084">
    <property type="entry name" value="Ribosomal_S18"/>
    <property type="match status" value="1"/>
</dbReference>
<dbReference type="PRINTS" id="PR00974">
    <property type="entry name" value="RIBOSOMALS18"/>
</dbReference>
<dbReference type="SUPFAM" id="SSF46911">
    <property type="entry name" value="Ribosomal protein S18"/>
    <property type="match status" value="1"/>
</dbReference>
<dbReference type="PROSITE" id="PS00057">
    <property type="entry name" value="RIBOSOMAL_S18"/>
    <property type="match status" value="1"/>
</dbReference>
<organism>
    <name type="scientific">Salmonella typhimurium (strain LT2 / SGSC1412 / ATCC 700720)</name>
    <dbReference type="NCBI Taxonomy" id="99287"/>
    <lineage>
        <taxon>Bacteria</taxon>
        <taxon>Pseudomonadati</taxon>
        <taxon>Pseudomonadota</taxon>
        <taxon>Gammaproteobacteria</taxon>
        <taxon>Enterobacterales</taxon>
        <taxon>Enterobacteriaceae</taxon>
        <taxon>Salmonella</taxon>
    </lineage>
</organism>
<gene>
    <name type="primary">rpsR</name>
    <name type="ordered locus">STM4393</name>
</gene>